<proteinExistence type="predicted"/>
<reference key="1">
    <citation type="journal article" date="1996" name="Microbiology">
        <title>Systematic sequencing of the 283 kb 210 degrees-232 degrees region of the Bacillus subtilis genome containing the skin element and many sporulation genes.</title>
        <authorList>
            <person name="Mizuno M."/>
            <person name="Masuda S."/>
            <person name="Takemaru K."/>
            <person name="Hosono S."/>
            <person name="Sato T."/>
            <person name="Takeuchi M."/>
            <person name="Kobayashi Y."/>
        </authorList>
    </citation>
    <scope>NUCLEOTIDE SEQUENCE [GENOMIC DNA]</scope>
    <source>
        <strain>168 / JH642</strain>
    </source>
</reference>
<reference key="2">
    <citation type="journal article" date="1997" name="Nature">
        <title>The complete genome sequence of the Gram-positive bacterium Bacillus subtilis.</title>
        <authorList>
            <person name="Kunst F."/>
            <person name="Ogasawara N."/>
            <person name="Moszer I."/>
            <person name="Albertini A.M."/>
            <person name="Alloni G."/>
            <person name="Azevedo V."/>
            <person name="Bertero M.G."/>
            <person name="Bessieres P."/>
            <person name="Bolotin A."/>
            <person name="Borchert S."/>
            <person name="Borriss R."/>
            <person name="Boursier L."/>
            <person name="Brans A."/>
            <person name="Braun M."/>
            <person name="Brignell S.C."/>
            <person name="Bron S."/>
            <person name="Brouillet S."/>
            <person name="Bruschi C.V."/>
            <person name="Caldwell B."/>
            <person name="Capuano V."/>
            <person name="Carter N.M."/>
            <person name="Choi S.-K."/>
            <person name="Codani J.-J."/>
            <person name="Connerton I.F."/>
            <person name="Cummings N.J."/>
            <person name="Daniel R.A."/>
            <person name="Denizot F."/>
            <person name="Devine K.M."/>
            <person name="Duesterhoeft A."/>
            <person name="Ehrlich S.D."/>
            <person name="Emmerson P.T."/>
            <person name="Entian K.-D."/>
            <person name="Errington J."/>
            <person name="Fabret C."/>
            <person name="Ferrari E."/>
            <person name="Foulger D."/>
            <person name="Fritz C."/>
            <person name="Fujita M."/>
            <person name="Fujita Y."/>
            <person name="Fuma S."/>
            <person name="Galizzi A."/>
            <person name="Galleron N."/>
            <person name="Ghim S.-Y."/>
            <person name="Glaser P."/>
            <person name="Goffeau A."/>
            <person name="Golightly E.J."/>
            <person name="Grandi G."/>
            <person name="Guiseppi G."/>
            <person name="Guy B.J."/>
            <person name="Haga K."/>
            <person name="Haiech J."/>
            <person name="Harwood C.R."/>
            <person name="Henaut A."/>
            <person name="Hilbert H."/>
            <person name="Holsappel S."/>
            <person name="Hosono S."/>
            <person name="Hullo M.-F."/>
            <person name="Itaya M."/>
            <person name="Jones L.-M."/>
            <person name="Joris B."/>
            <person name="Karamata D."/>
            <person name="Kasahara Y."/>
            <person name="Klaerr-Blanchard M."/>
            <person name="Klein C."/>
            <person name="Kobayashi Y."/>
            <person name="Koetter P."/>
            <person name="Koningstein G."/>
            <person name="Krogh S."/>
            <person name="Kumano M."/>
            <person name="Kurita K."/>
            <person name="Lapidus A."/>
            <person name="Lardinois S."/>
            <person name="Lauber J."/>
            <person name="Lazarevic V."/>
            <person name="Lee S.-M."/>
            <person name="Levine A."/>
            <person name="Liu H."/>
            <person name="Masuda S."/>
            <person name="Mauel C."/>
            <person name="Medigue C."/>
            <person name="Medina N."/>
            <person name="Mellado R.P."/>
            <person name="Mizuno M."/>
            <person name="Moestl D."/>
            <person name="Nakai S."/>
            <person name="Noback M."/>
            <person name="Noone D."/>
            <person name="O'Reilly M."/>
            <person name="Ogawa K."/>
            <person name="Ogiwara A."/>
            <person name="Oudega B."/>
            <person name="Park S.-H."/>
            <person name="Parro V."/>
            <person name="Pohl T.M."/>
            <person name="Portetelle D."/>
            <person name="Porwollik S."/>
            <person name="Prescott A.M."/>
            <person name="Presecan E."/>
            <person name="Pujic P."/>
            <person name="Purnelle B."/>
            <person name="Rapoport G."/>
            <person name="Rey M."/>
            <person name="Reynolds S."/>
            <person name="Rieger M."/>
            <person name="Rivolta C."/>
            <person name="Rocha E."/>
            <person name="Roche B."/>
            <person name="Rose M."/>
            <person name="Sadaie Y."/>
            <person name="Sato T."/>
            <person name="Scanlan E."/>
            <person name="Schleich S."/>
            <person name="Schroeter R."/>
            <person name="Scoffone F."/>
            <person name="Sekiguchi J."/>
            <person name="Sekowska A."/>
            <person name="Seror S.J."/>
            <person name="Serror P."/>
            <person name="Shin B.-S."/>
            <person name="Soldo B."/>
            <person name="Sorokin A."/>
            <person name="Tacconi E."/>
            <person name="Takagi T."/>
            <person name="Takahashi H."/>
            <person name="Takemaru K."/>
            <person name="Takeuchi M."/>
            <person name="Tamakoshi A."/>
            <person name="Tanaka T."/>
            <person name="Terpstra P."/>
            <person name="Tognoni A."/>
            <person name="Tosato V."/>
            <person name="Uchiyama S."/>
            <person name="Vandenbol M."/>
            <person name="Vannier F."/>
            <person name="Vassarotti A."/>
            <person name="Viari A."/>
            <person name="Wambutt R."/>
            <person name="Wedler E."/>
            <person name="Wedler H."/>
            <person name="Weitzenegger T."/>
            <person name="Winters P."/>
            <person name="Wipat A."/>
            <person name="Yamamoto H."/>
            <person name="Yamane K."/>
            <person name="Yasumoto K."/>
            <person name="Yata K."/>
            <person name="Yoshida K."/>
            <person name="Yoshikawa H.-F."/>
            <person name="Zumstein E."/>
            <person name="Yoshikawa H."/>
            <person name="Danchin A."/>
        </authorList>
    </citation>
    <scope>NUCLEOTIDE SEQUENCE [LARGE SCALE GENOMIC DNA]</scope>
    <source>
        <strain>168</strain>
    </source>
</reference>
<feature type="chain" id="PRO_0000049824" description="Uncharacterized protein YqhR">
    <location>
        <begin position="1"/>
        <end position="178"/>
    </location>
</feature>
<feature type="transmembrane region" description="Helical" evidence="1">
    <location>
        <begin position="29"/>
        <end position="49"/>
    </location>
</feature>
<feature type="transmembrane region" description="Helical" evidence="1">
    <location>
        <begin position="76"/>
        <end position="96"/>
    </location>
</feature>
<feature type="transmembrane region" description="Helical" evidence="1">
    <location>
        <begin position="105"/>
        <end position="125"/>
    </location>
</feature>
<feature type="transmembrane region" description="Helical" evidence="1">
    <location>
        <begin position="139"/>
        <end position="159"/>
    </location>
</feature>
<sequence>MMTSEKDTEQNEELNEKQKPPVSMAGRVAATGFCGGVLWSFVAYIAYLFHFSEISPNMILQPFVLGEWKKHGLGTVISIILIGVISIGAAFLYFLLLKRLKTMWPGILYGLVLWLLVFFVFNPIFPDVRTVTELTSDTIITTICIYLLYGLFVGYSISFEYNELNSEKLARALGMHRE</sequence>
<keyword id="KW-1003">Cell membrane</keyword>
<keyword id="KW-0472">Membrane</keyword>
<keyword id="KW-1185">Reference proteome</keyword>
<keyword id="KW-0812">Transmembrane</keyword>
<keyword id="KW-1133">Transmembrane helix</keyword>
<evidence type="ECO:0000255" key="1"/>
<evidence type="ECO:0000305" key="2"/>
<gene>
    <name type="primary">yqhR</name>
    <name type="ordered locus">BSU24480</name>
</gene>
<comment type="subcellular location">
    <subcellularLocation>
        <location evidence="2">Cell membrane</location>
        <topology evidence="2">Multi-pass membrane protein</topology>
    </subcellularLocation>
</comment>
<name>YQHR_BACSU</name>
<organism>
    <name type="scientific">Bacillus subtilis (strain 168)</name>
    <dbReference type="NCBI Taxonomy" id="224308"/>
    <lineage>
        <taxon>Bacteria</taxon>
        <taxon>Bacillati</taxon>
        <taxon>Bacillota</taxon>
        <taxon>Bacilli</taxon>
        <taxon>Bacillales</taxon>
        <taxon>Bacillaceae</taxon>
        <taxon>Bacillus</taxon>
    </lineage>
</organism>
<dbReference type="EMBL" id="D84432">
    <property type="protein sequence ID" value="BAA12555.1"/>
    <property type="molecule type" value="Genomic_DNA"/>
</dbReference>
<dbReference type="EMBL" id="AL009126">
    <property type="protein sequence ID" value="CAB14379.1"/>
    <property type="molecule type" value="Genomic_DNA"/>
</dbReference>
<dbReference type="PIR" id="A69960">
    <property type="entry name" value="A69960"/>
</dbReference>
<dbReference type="RefSeq" id="NP_390328.1">
    <property type="nucleotide sequence ID" value="NC_000964.3"/>
</dbReference>
<dbReference type="RefSeq" id="WP_003230222.1">
    <property type="nucleotide sequence ID" value="NZ_OZ025638.1"/>
</dbReference>
<dbReference type="SMR" id="P54516"/>
<dbReference type="FunCoup" id="P54516">
    <property type="interactions" value="86"/>
</dbReference>
<dbReference type="STRING" id="224308.BSU24480"/>
<dbReference type="PaxDb" id="224308-BSU24480"/>
<dbReference type="EnsemblBacteria" id="CAB14379">
    <property type="protein sequence ID" value="CAB14379"/>
    <property type="gene ID" value="BSU_24480"/>
</dbReference>
<dbReference type="GeneID" id="938555"/>
<dbReference type="KEGG" id="bsu:BSU24480"/>
<dbReference type="PATRIC" id="fig|224308.43.peg.2555"/>
<dbReference type="eggNOG" id="ENOG5030H6A">
    <property type="taxonomic scope" value="Bacteria"/>
</dbReference>
<dbReference type="InParanoid" id="P54516"/>
<dbReference type="OrthoDB" id="2691442at2"/>
<dbReference type="BioCyc" id="BSUB:BSU24480-MONOMER"/>
<dbReference type="Proteomes" id="UP000001570">
    <property type="component" value="Chromosome"/>
</dbReference>
<dbReference type="GO" id="GO:0005886">
    <property type="term" value="C:plasma membrane"/>
    <property type="evidence" value="ECO:0007669"/>
    <property type="project" value="UniProtKB-SubCell"/>
</dbReference>
<dbReference type="InterPro" id="IPR024563">
    <property type="entry name" value="YqhR"/>
</dbReference>
<dbReference type="Pfam" id="PF11085">
    <property type="entry name" value="YqhR"/>
    <property type="match status" value="1"/>
</dbReference>
<accession>P54516</accession>
<protein>
    <recommendedName>
        <fullName>Uncharacterized protein YqhR</fullName>
    </recommendedName>
</protein>